<name>CGLR_POCDA</name>
<feature type="chain" id="PRO_0000460023" description="Cyclic GMP-AMP synthase-like receptor">
    <location>
        <begin position="1"/>
        <end position="432"/>
    </location>
</feature>
<feature type="binding site" evidence="2">
    <location>
        <position position="59"/>
    </location>
    <ligand>
        <name>ATP</name>
        <dbReference type="ChEBI" id="CHEBI:30616"/>
    </ligand>
</feature>
<feature type="binding site" evidence="2">
    <location>
        <begin position="71"/>
        <end position="73"/>
    </location>
    <ligand>
        <name>ATP</name>
        <dbReference type="ChEBI" id="CHEBI:30616"/>
    </ligand>
</feature>
<feature type="binding site" evidence="2">
    <location>
        <position position="71"/>
    </location>
    <ligand>
        <name>Mg(2+)</name>
        <dbReference type="ChEBI" id="CHEBI:18420"/>
        <note>catalytic</note>
    </ligand>
</feature>
<feature type="binding site" evidence="6">
    <location>
        <position position="73"/>
    </location>
    <ligand>
        <name>Mg(2+)</name>
        <dbReference type="ChEBI" id="CHEBI:18420"/>
        <note>catalytic</note>
    </ligand>
</feature>
<feature type="binding site" evidence="2">
    <location>
        <position position="205"/>
    </location>
    <ligand>
        <name>GTP</name>
        <dbReference type="ChEBI" id="CHEBI:37565"/>
    </ligand>
</feature>
<feature type="binding site" evidence="2">
    <location>
        <position position="205"/>
    </location>
    <ligand>
        <name>Mg(2+)</name>
        <dbReference type="ChEBI" id="CHEBI:18420"/>
        <note>catalytic</note>
    </ligand>
</feature>
<feature type="binding site" evidence="2">
    <location>
        <begin position="255"/>
        <end position="262"/>
    </location>
    <ligand>
        <name>GTP</name>
        <dbReference type="ChEBI" id="CHEBI:37565"/>
    </ligand>
</feature>
<feature type="binding site" evidence="2">
    <location>
        <begin position="259"/>
        <end position="262"/>
    </location>
    <ligand>
        <name>ATP</name>
        <dbReference type="ChEBI" id="CHEBI:30616"/>
    </ligand>
</feature>
<feature type="binding site" evidence="2">
    <location>
        <position position="284"/>
    </location>
    <ligand>
        <name>ATP</name>
        <dbReference type="ChEBI" id="CHEBI:30616"/>
    </ligand>
</feature>
<feature type="binding site" evidence="2">
    <location>
        <begin position="303"/>
        <end position="307"/>
    </location>
    <ligand>
        <name>ATP</name>
        <dbReference type="ChEBI" id="CHEBI:30616"/>
    </ligand>
</feature>
<feature type="mutagenesis site" description="Abolished nucleotidyltransferase activity." evidence="3">
    <original>D</original>
    <variation>N</variation>
    <location>
        <position position="73"/>
    </location>
</feature>
<reference key="1">
    <citation type="journal article" date="2018" name="Sci. Rep.">
        <title>Comparative analysis of the Pocillopora damicornis genome highlights role of immune system in coral evolution.</title>
        <authorList>
            <person name="Cunning R."/>
            <person name="Bay R.A."/>
            <person name="Gillette P."/>
            <person name="Baker A.C."/>
            <person name="Traylor-Knowles N."/>
        </authorList>
    </citation>
    <scope>NUCLEOTIDE SEQUENCE [LARGE SCALE GENOMIC DNA]</scope>
    <source>
        <strain>RSMAS</strain>
    </source>
</reference>
<reference key="2">
    <citation type="journal article" date="2023" name="Cell">
        <title>cGLRs are a diverse family of pattern recognition receptors in innate immunity.</title>
        <authorList>
            <person name="Li Y."/>
            <person name="Slavik K.M."/>
            <person name="Toyoda H.C."/>
            <person name="Morehouse B.R."/>
            <person name="de Oliveira Mann C.C."/>
            <person name="Elek A."/>
            <person name="Levy S."/>
            <person name="Wang Z."/>
            <person name="Mears K.S."/>
            <person name="Liu J."/>
            <person name="Kashin D."/>
            <person name="Guo X."/>
            <person name="Mass T."/>
            <person name="Sebe-Pedros A."/>
            <person name="Schwede F."/>
            <person name="Kranzusch P.J."/>
        </authorList>
    </citation>
    <scope>FUNCTION</scope>
    <scope>CATALYTIC ACTIVITY</scope>
    <scope>MUTAGENESIS OF ASP-73</scope>
</reference>
<accession>A0A3M6TIF0</accession>
<protein>
    <recommendedName>
        <fullName>Cyclic GMP-AMP synthase-like receptor</fullName>
        <shortName evidence="4">Pd-cGLR</shortName>
        <ecNumber evidence="3">2.7.7.86</ecNumber>
    </recommendedName>
</protein>
<sequence>MASNVEDTLIKLDRLHSVDYKNDEVQLIKSKIEGIVHQISNRIGELNPILSNSVVHCGSFYHNSKINAPDEFDFLLVLNKFSQPGVCSCKPFEDPEYTHLVSLGIDNTKLNWNPQSVLEWEEDAANKQTLLQATIDSEYRNAVCSCLATMSLPDGISLTTSQKSVRRRFEGGEEFLANFKFSGPALTLLLNWKGVYYPNLNISVDVTYVIAMRGLPSFCNLDKRLPSEHLIVKAGLCADASHELLYCRMLDDTWKQTCSVLENKIICFWFKENDASNVCYRLLKIIRNLVTPVNQLGEAFLKTYALKTLFLYECEQFPDSKFWRTDELSTHLLTIFQKLLSAIQNRFLPNYFNENQNALCYPLDSRPEDENEEGENKFISSVYEAMCKIIEDIISSLEKGLASEQTLKFYFEPGQKIVIKDPDIQDALEKEN</sequence>
<keyword id="KW-0067">ATP-binding</keyword>
<keyword id="KW-0342">GTP-binding</keyword>
<keyword id="KW-0391">Immunity</keyword>
<keyword id="KW-0399">Innate immunity</keyword>
<keyword id="KW-0460">Magnesium</keyword>
<keyword id="KW-0464">Manganese</keyword>
<keyword id="KW-0479">Metal-binding</keyword>
<keyword id="KW-0547">Nucleotide-binding</keyword>
<keyword id="KW-0548">Nucleotidyltransferase</keyword>
<keyword id="KW-1185">Reference proteome</keyword>
<keyword id="KW-0808">Transferase</keyword>
<organism>
    <name type="scientific">Pocillopora damicornis</name>
    <name type="common">Cauliflower coral</name>
    <name type="synonym">Millepora damicornis</name>
    <dbReference type="NCBI Taxonomy" id="46731"/>
    <lineage>
        <taxon>Eukaryota</taxon>
        <taxon>Metazoa</taxon>
        <taxon>Cnidaria</taxon>
        <taxon>Anthozoa</taxon>
        <taxon>Hexacorallia</taxon>
        <taxon>Scleractinia</taxon>
        <taxon>Astrocoeniina</taxon>
        <taxon>Pocilloporidae</taxon>
        <taxon>Pocillopora</taxon>
    </lineage>
</organism>
<proteinExistence type="evidence at protein level"/>
<dbReference type="EC" id="2.7.7.86" evidence="3"/>
<dbReference type="EMBL" id="RCHS01003537">
    <property type="protein sequence ID" value="RMX41024.1"/>
    <property type="molecule type" value="Genomic_DNA"/>
</dbReference>
<dbReference type="SMR" id="A0A3M6TIF0"/>
<dbReference type="EnsemblMetazoa" id="XM_027194191.1">
    <property type="protein sequence ID" value="XP_027049992.1"/>
    <property type="gene ID" value="LOC113677374"/>
</dbReference>
<dbReference type="OMA" id="HNSKINA"/>
<dbReference type="OrthoDB" id="5948335at2759"/>
<dbReference type="Proteomes" id="UP000275408">
    <property type="component" value="Unassembled WGS sequence"/>
</dbReference>
<dbReference type="GO" id="GO:0061501">
    <property type="term" value="F:2',3'-cyclic GMP-AMP synthase activity"/>
    <property type="evidence" value="ECO:0000314"/>
    <property type="project" value="UniProtKB"/>
</dbReference>
<dbReference type="GO" id="GO:0005524">
    <property type="term" value="F:ATP binding"/>
    <property type="evidence" value="ECO:0007669"/>
    <property type="project" value="UniProtKB-KW"/>
</dbReference>
<dbReference type="GO" id="GO:0005525">
    <property type="term" value="F:GTP binding"/>
    <property type="evidence" value="ECO:0007669"/>
    <property type="project" value="UniProtKB-KW"/>
</dbReference>
<dbReference type="GO" id="GO:0046872">
    <property type="term" value="F:metal ion binding"/>
    <property type="evidence" value="ECO:0007669"/>
    <property type="project" value="UniProtKB-KW"/>
</dbReference>
<dbReference type="GO" id="GO:0045087">
    <property type="term" value="P:innate immune response"/>
    <property type="evidence" value="ECO:0007669"/>
    <property type="project" value="UniProtKB-KW"/>
</dbReference>
<dbReference type="Gene3D" id="1.10.1410.40">
    <property type="match status" value="1"/>
</dbReference>
<dbReference type="Gene3D" id="3.30.460.90">
    <property type="match status" value="1"/>
</dbReference>
<dbReference type="InterPro" id="IPR046906">
    <property type="entry name" value="Mab-21_HhH/H2TH-like"/>
</dbReference>
<dbReference type="InterPro" id="IPR024810">
    <property type="entry name" value="MAB21L/cGLR"/>
</dbReference>
<dbReference type="PANTHER" id="PTHR10656">
    <property type="entry name" value="CELL FATE DETERMINING PROTEIN MAB21-RELATED"/>
    <property type="match status" value="1"/>
</dbReference>
<dbReference type="PANTHER" id="PTHR10656:SF42">
    <property type="entry name" value="CYCLIC GMP-AMP SYNTHASE-LIKE PROTEIN-RELATED"/>
    <property type="match status" value="1"/>
</dbReference>
<dbReference type="Pfam" id="PF20266">
    <property type="entry name" value="Mab-21_C"/>
    <property type="match status" value="1"/>
</dbReference>
<dbReference type="SMART" id="SM01265">
    <property type="entry name" value="Mab-21"/>
    <property type="match status" value="1"/>
</dbReference>
<evidence type="ECO:0000250" key="1">
    <source>
        <dbReference type="UniProtKB" id="D6WI29"/>
    </source>
</evidence>
<evidence type="ECO:0000250" key="2">
    <source>
        <dbReference type="UniProtKB" id="Q8N884"/>
    </source>
</evidence>
<evidence type="ECO:0000269" key="3">
    <source>
    </source>
</evidence>
<evidence type="ECO:0000303" key="4">
    <source>
    </source>
</evidence>
<evidence type="ECO:0000305" key="5"/>
<evidence type="ECO:0000305" key="6">
    <source>
    </source>
</evidence>
<comment type="function">
    <text evidence="3">Nucleotidyltransferase that catalyzes the formation of cyclic GMP-AMP (2',3'-cGAMP) from ATP and GTP and plays a key role in innate immunity (PubMed:37379839). Directly binds some unknown ligand, activating the nucleotidyltransferase activity, leading to synthesis of 2',3'-cGAMP, a second messenger that binds to and activates Sting, thereby triggering the immune response via activation of the NF-kappa-B transcription factor (PubMed:37379839).</text>
</comment>
<comment type="catalytic activity">
    <reaction evidence="3">
        <text>GTP + ATP = 2',3'-cGAMP + 2 diphosphate</text>
        <dbReference type="Rhea" id="RHEA:42064"/>
        <dbReference type="ChEBI" id="CHEBI:30616"/>
        <dbReference type="ChEBI" id="CHEBI:33019"/>
        <dbReference type="ChEBI" id="CHEBI:37565"/>
        <dbReference type="ChEBI" id="CHEBI:143093"/>
        <dbReference type="EC" id="2.7.7.86"/>
    </reaction>
    <physiologicalReaction direction="left-to-right" evidence="3">
        <dbReference type="Rhea" id="RHEA:42065"/>
    </physiologicalReaction>
</comment>
<comment type="catalytic activity">
    <reaction evidence="3">
        <text>GTP + ATP = pppGp(2'-5')A + diphosphate</text>
        <dbReference type="Rhea" id="RHEA:23748"/>
        <dbReference type="ChEBI" id="CHEBI:30616"/>
        <dbReference type="ChEBI" id="CHEBI:33019"/>
        <dbReference type="ChEBI" id="CHEBI:37565"/>
        <dbReference type="ChEBI" id="CHEBI:78318"/>
    </reaction>
    <physiologicalReaction direction="left-to-right" evidence="3">
        <dbReference type="Rhea" id="RHEA:23749"/>
    </physiologicalReaction>
</comment>
<comment type="catalytic activity">
    <reaction evidence="3">
        <text>pppGp(2'-5')A = 2',3'-cGAMP + diphosphate</text>
        <dbReference type="Rhea" id="RHEA:23924"/>
        <dbReference type="ChEBI" id="CHEBI:33019"/>
        <dbReference type="ChEBI" id="CHEBI:78318"/>
        <dbReference type="ChEBI" id="CHEBI:143093"/>
    </reaction>
    <physiologicalReaction direction="left-to-right" evidence="3">
        <dbReference type="Rhea" id="RHEA:23925"/>
    </physiologicalReaction>
</comment>
<comment type="cofactor">
    <cofactor evidence="1">
        <name>Mg(2+)</name>
        <dbReference type="ChEBI" id="CHEBI:18420"/>
    </cofactor>
    <cofactor evidence="1">
        <name>Mn(2+)</name>
        <dbReference type="ChEBI" id="CHEBI:29035"/>
    </cofactor>
</comment>
<comment type="similarity">
    <text evidence="5">Belongs to the mab-21 family.</text>
</comment>
<gene>
    <name evidence="4" type="primary">cGLR</name>
    <name type="ORF">pdam_00011560</name>
</gene>